<reference key="1">
    <citation type="journal article" date="2010" name="J. Bacteriol.">
        <title>Genome sequence of the deep-rooted Yersinia pestis strain Angola reveals new insights into the evolution and pangenome of the plague bacterium.</title>
        <authorList>
            <person name="Eppinger M."/>
            <person name="Worsham P.L."/>
            <person name="Nikolich M.P."/>
            <person name="Riley D.R."/>
            <person name="Sebastian Y."/>
            <person name="Mou S."/>
            <person name="Achtman M."/>
            <person name="Lindler L.E."/>
            <person name="Ravel J."/>
        </authorList>
    </citation>
    <scope>NUCLEOTIDE SEQUENCE [LARGE SCALE GENOMIC DNA]</scope>
    <source>
        <strain>Angola</strain>
    </source>
</reference>
<sequence>MTENNEFDVADLRREYIRGGLRRSDLTENPLELFERWLKQACEARLPDPTAMCVATVDTNGQPYQRIVLLKHYDDQGLVFYTNLGSRKAQQLAENPHISLLFPWHMLDRQVIFLGKAERLSTLEVLKYFHSRPKDSQIGAWVSQQSSRISARGVLESKFLELKQKFQQGDVPLPSFWGGFRVKFDSVEFWQGGEHRLHDRFIYQREADAWKIDRLAP</sequence>
<proteinExistence type="inferred from homology"/>
<comment type="function">
    <text evidence="1">Catalyzes the oxidation of either pyridoxine 5'-phosphate (PNP) or pyridoxamine 5'-phosphate (PMP) into pyridoxal 5'-phosphate (PLP).</text>
</comment>
<comment type="catalytic activity">
    <reaction evidence="1">
        <text>pyridoxamine 5'-phosphate + O2 + H2O = pyridoxal 5'-phosphate + H2O2 + NH4(+)</text>
        <dbReference type="Rhea" id="RHEA:15817"/>
        <dbReference type="ChEBI" id="CHEBI:15377"/>
        <dbReference type="ChEBI" id="CHEBI:15379"/>
        <dbReference type="ChEBI" id="CHEBI:16240"/>
        <dbReference type="ChEBI" id="CHEBI:28938"/>
        <dbReference type="ChEBI" id="CHEBI:58451"/>
        <dbReference type="ChEBI" id="CHEBI:597326"/>
        <dbReference type="EC" id="1.4.3.5"/>
    </reaction>
</comment>
<comment type="catalytic activity">
    <reaction evidence="1">
        <text>pyridoxine 5'-phosphate + O2 = pyridoxal 5'-phosphate + H2O2</text>
        <dbReference type="Rhea" id="RHEA:15149"/>
        <dbReference type="ChEBI" id="CHEBI:15379"/>
        <dbReference type="ChEBI" id="CHEBI:16240"/>
        <dbReference type="ChEBI" id="CHEBI:58589"/>
        <dbReference type="ChEBI" id="CHEBI:597326"/>
        <dbReference type="EC" id="1.4.3.5"/>
    </reaction>
</comment>
<comment type="cofactor">
    <cofactor evidence="1">
        <name>FMN</name>
        <dbReference type="ChEBI" id="CHEBI:58210"/>
    </cofactor>
    <text evidence="1">Binds 1 FMN per subunit.</text>
</comment>
<comment type="pathway">
    <text evidence="1">Cofactor metabolism; pyridoxal 5'-phosphate salvage; pyridoxal 5'-phosphate from pyridoxamine 5'-phosphate: step 1/1.</text>
</comment>
<comment type="pathway">
    <text evidence="1">Cofactor metabolism; pyridoxal 5'-phosphate salvage; pyridoxal 5'-phosphate from pyridoxine 5'-phosphate: step 1/1.</text>
</comment>
<comment type="subunit">
    <text evidence="1">Homodimer.</text>
</comment>
<comment type="similarity">
    <text evidence="1">Belongs to the pyridoxamine 5'-phosphate oxidase family.</text>
</comment>
<dbReference type="EC" id="1.4.3.5" evidence="1"/>
<dbReference type="EMBL" id="CP000901">
    <property type="protein sequence ID" value="ABX87086.1"/>
    <property type="molecule type" value="Genomic_DNA"/>
</dbReference>
<dbReference type="RefSeq" id="WP_002210959.1">
    <property type="nucleotide sequence ID" value="NZ_CP009935.1"/>
</dbReference>
<dbReference type="SMR" id="A9QZ96"/>
<dbReference type="GeneID" id="57976305"/>
<dbReference type="KEGG" id="ypg:YpAngola_A2555"/>
<dbReference type="PATRIC" id="fig|349746.12.peg.3579"/>
<dbReference type="UniPathway" id="UPA01068">
    <property type="reaction ID" value="UER00304"/>
</dbReference>
<dbReference type="UniPathway" id="UPA01068">
    <property type="reaction ID" value="UER00305"/>
</dbReference>
<dbReference type="GO" id="GO:0010181">
    <property type="term" value="F:FMN binding"/>
    <property type="evidence" value="ECO:0007669"/>
    <property type="project" value="UniProtKB-UniRule"/>
</dbReference>
<dbReference type="GO" id="GO:0004733">
    <property type="term" value="F:pyridoxamine phosphate oxidase activity"/>
    <property type="evidence" value="ECO:0007669"/>
    <property type="project" value="UniProtKB-UniRule"/>
</dbReference>
<dbReference type="GO" id="GO:0008615">
    <property type="term" value="P:pyridoxine biosynthetic process"/>
    <property type="evidence" value="ECO:0007669"/>
    <property type="project" value="UniProtKB-KW"/>
</dbReference>
<dbReference type="FunFam" id="2.30.110.10:FF:000001">
    <property type="entry name" value="Pyridoxine/pyridoxamine 5'-phosphate oxidase"/>
    <property type="match status" value="1"/>
</dbReference>
<dbReference type="Gene3D" id="2.30.110.10">
    <property type="entry name" value="Electron Transport, Fmn-binding Protein, Chain A"/>
    <property type="match status" value="1"/>
</dbReference>
<dbReference type="HAMAP" id="MF_01629">
    <property type="entry name" value="PdxH"/>
    <property type="match status" value="1"/>
</dbReference>
<dbReference type="InterPro" id="IPR000659">
    <property type="entry name" value="Pyridox_Oxase"/>
</dbReference>
<dbReference type="InterPro" id="IPR019740">
    <property type="entry name" value="Pyridox_Oxase_CS"/>
</dbReference>
<dbReference type="InterPro" id="IPR011576">
    <property type="entry name" value="Pyridox_Oxase_N"/>
</dbReference>
<dbReference type="InterPro" id="IPR019576">
    <property type="entry name" value="Pyridoxamine_oxidase_dimer_C"/>
</dbReference>
<dbReference type="InterPro" id="IPR012349">
    <property type="entry name" value="Split_barrel_FMN-bd"/>
</dbReference>
<dbReference type="NCBIfam" id="TIGR00558">
    <property type="entry name" value="pdxH"/>
    <property type="match status" value="1"/>
</dbReference>
<dbReference type="NCBIfam" id="NF004231">
    <property type="entry name" value="PRK05679.1"/>
    <property type="match status" value="1"/>
</dbReference>
<dbReference type="PANTHER" id="PTHR10851:SF0">
    <property type="entry name" value="PYRIDOXINE-5'-PHOSPHATE OXIDASE"/>
    <property type="match status" value="1"/>
</dbReference>
<dbReference type="PANTHER" id="PTHR10851">
    <property type="entry name" value="PYRIDOXINE-5-PHOSPHATE OXIDASE"/>
    <property type="match status" value="1"/>
</dbReference>
<dbReference type="Pfam" id="PF10590">
    <property type="entry name" value="PNP_phzG_C"/>
    <property type="match status" value="1"/>
</dbReference>
<dbReference type="Pfam" id="PF01243">
    <property type="entry name" value="PNPOx_N"/>
    <property type="match status" value="1"/>
</dbReference>
<dbReference type="PIRSF" id="PIRSF000190">
    <property type="entry name" value="Pyd_amn-ph_oxd"/>
    <property type="match status" value="1"/>
</dbReference>
<dbReference type="SUPFAM" id="SSF50475">
    <property type="entry name" value="FMN-binding split barrel"/>
    <property type="match status" value="1"/>
</dbReference>
<dbReference type="PROSITE" id="PS01064">
    <property type="entry name" value="PYRIDOX_OXIDASE"/>
    <property type="match status" value="1"/>
</dbReference>
<keyword id="KW-0285">Flavoprotein</keyword>
<keyword id="KW-0288">FMN</keyword>
<keyword id="KW-0560">Oxidoreductase</keyword>
<keyword id="KW-0664">Pyridoxine biosynthesis</keyword>
<feature type="chain" id="PRO_1000186347" description="Pyridoxine/pyridoxamine 5'-phosphate oxidase">
    <location>
        <begin position="1"/>
        <end position="217"/>
    </location>
</feature>
<feature type="binding site" evidence="1">
    <location>
        <begin position="13"/>
        <end position="16"/>
    </location>
    <ligand>
        <name>substrate</name>
    </ligand>
</feature>
<feature type="binding site" evidence="1">
    <location>
        <begin position="66"/>
        <end position="71"/>
    </location>
    <ligand>
        <name>FMN</name>
        <dbReference type="ChEBI" id="CHEBI:58210"/>
    </ligand>
</feature>
<feature type="binding site" evidence="1">
    <location>
        <position position="71"/>
    </location>
    <ligand>
        <name>substrate</name>
    </ligand>
</feature>
<feature type="binding site" evidence="1">
    <location>
        <begin position="81"/>
        <end position="82"/>
    </location>
    <ligand>
        <name>FMN</name>
        <dbReference type="ChEBI" id="CHEBI:58210"/>
    </ligand>
</feature>
<feature type="binding site" evidence="1">
    <location>
        <position position="87"/>
    </location>
    <ligand>
        <name>FMN</name>
        <dbReference type="ChEBI" id="CHEBI:58210"/>
    </ligand>
</feature>
<feature type="binding site" evidence="1">
    <location>
        <position position="88"/>
    </location>
    <ligand>
        <name>FMN</name>
        <dbReference type="ChEBI" id="CHEBI:58210"/>
    </ligand>
</feature>
<feature type="binding site" evidence="1">
    <location>
        <position position="110"/>
    </location>
    <ligand>
        <name>FMN</name>
        <dbReference type="ChEBI" id="CHEBI:58210"/>
    </ligand>
</feature>
<feature type="binding site" evidence="1">
    <location>
        <position position="128"/>
    </location>
    <ligand>
        <name>substrate</name>
    </ligand>
</feature>
<feature type="binding site" evidence="1">
    <location>
        <position position="132"/>
    </location>
    <ligand>
        <name>substrate</name>
    </ligand>
</feature>
<feature type="binding site" evidence="1">
    <location>
        <position position="136"/>
    </location>
    <ligand>
        <name>substrate</name>
    </ligand>
</feature>
<feature type="binding site" evidence="1">
    <location>
        <begin position="145"/>
        <end position="146"/>
    </location>
    <ligand>
        <name>FMN</name>
        <dbReference type="ChEBI" id="CHEBI:58210"/>
    </ligand>
</feature>
<feature type="binding site" evidence="1">
    <location>
        <position position="190"/>
    </location>
    <ligand>
        <name>FMN</name>
        <dbReference type="ChEBI" id="CHEBI:58210"/>
    </ligand>
</feature>
<feature type="binding site" evidence="1">
    <location>
        <begin position="196"/>
        <end position="198"/>
    </location>
    <ligand>
        <name>substrate</name>
    </ligand>
</feature>
<feature type="binding site" evidence="1">
    <location>
        <position position="200"/>
    </location>
    <ligand>
        <name>FMN</name>
        <dbReference type="ChEBI" id="CHEBI:58210"/>
    </ligand>
</feature>
<name>PDXH_YERPG</name>
<accession>A9QZ96</accession>
<gene>
    <name evidence="1" type="primary">pdxH</name>
    <name type="ordered locus">YpAngola_A2555</name>
</gene>
<evidence type="ECO:0000255" key="1">
    <source>
        <dbReference type="HAMAP-Rule" id="MF_01629"/>
    </source>
</evidence>
<protein>
    <recommendedName>
        <fullName evidence="1">Pyridoxine/pyridoxamine 5'-phosphate oxidase</fullName>
        <ecNumber evidence="1">1.4.3.5</ecNumber>
    </recommendedName>
    <alternativeName>
        <fullName evidence="1">PNP/PMP oxidase</fullName>
        <shortName evidence="1">PNPOx</shortName>
    </alternativeName>
    <alternativeName>
        <fullName evidence="1">Pyridoxal 5'-phosphate synthase</fullName>
    </alternativeName>
</protein>
<organism>
    <name type="scientific">Yersinia pestis bv. Antiqua (strain Angola)</name>
    <dbReference type="NCBI Taxonomy" id="349746"/>
    <lineage>
        <taxon>Bacteria</taxon>
        <taxon>Pseudomonadati</taxon>
        <taxon>Pseudomonadota</taxon>
        <taxon>Gammaproteobacteria</taxon>
        <taxon>Enterobacterales</taxon>
        <taxon>Yersiniaceae</taxon>
        <taxon>Yersinia</taxon>
    </lineage>
</organism>